<dbReference type="EC" id="2.4.1.-"/>
<dbReference type="EMBL" id="CP017626">
    <property type="protein sequence ID" value="AOW28981.1"/>
    <property type="molecule type" value="Genomic_DNA"/>
</dbReference>
<dbReference type="RefSeq" id="XP_722653.1">
    <property type="nucleotide sequence ID" value="XM_717560.1"/>
</dbReference>
<dbReference type="SMR" id="Q5AMR5"/>
<dbReference type="FunCoup" id="Q5AMR5">
    <property type="interactions" value="623"/>
</dbReference>
<dbReference type="STRING" id="237561.Q5AMR5"/>
<dbReference type="EnsemblFungi" id="C4_02100C_A-T">
    <property type="protein sequence ID" value="C4_02100C_A-T-p1"/>
    <property type="gene ID" value="C4_02100C_A"/>
</dbReference>
<dbReference type="GeneID" id="3635641"/>
<dbReference type="KEGG" id="cal:CAALFM_C402100CA"/>
<dbReference type="CGD" id="CAL0000197470">
    <property type="gene designation" value="GPI14"/>
</dbReference>
<dbReference type="VEuPathDB" id="FungiDB:C4_02100C_A"/>
<dbReference type="eggNOG" id="KOG3893">
    <property type="taxonomic scope" value="Eukaryota"/>
</dbReference>
<dbReference type="HOGENOM" id="CLU_024220_1_0_1"/>
<dbReference type="InParanoid" id="Q5AMR5"/>
<dbReference type="OMA" id="LINCWIL"/>
<dbReference type="OrthoDB" id="1741594at2759"/>
<dbReference type="UniPathway" id="UPA00196"/>
<dbReference type="PRO" id="PR:Q5AMR5"/>
<dbReference type="Proteomes" id="UP000000559">
    <property type="component" value="Chromosome 4"/>
</dbReference>
<dbReference type="GO" id="GO:0005789">
    <property type="term" value="C:endoplasmic reticulum membrane"/>
    <property type="evidence" value="ECO:0007669"/>
    <property type="project" value="UniProtKB-SubCell"/>
</dbReference>
<dbReference type="GO" id="GO:1990529">
    <property type="term" value="C:glycosylphosphatidylinositol-mannosyltransferase I complex"/>
    <property type="evidence" value="ECO:0000318"/>
    <property type="project" value="GO_Central"/>
</dbReference>
<dbReference type="GO" id="GO:0051751">
    <property type="term" value="F:alpha-1,4-mannosyltransferase activity"/>
    <property type="evidence" value="ECO:0007669"/>
    <property type="project" value="InterPro"/>
</dbReference>
<dbReference type="GO" id="GO:0004376">
    <property type="term" value="F:glycolipid mannosyltransferase activity"/>
    <property type="evidence" value="ECO:0007669"/>
    <property type="project" value="InterPro"/>
</dbReference>
<dbReference type="GO" id="GO:0000030">
    <property type="term" value="F:mannosyltransferase activity"/>
    <property type="evidence" value="ECO:0000318"/>
    <property type="project" value="GO_Central"/>
</dbReference>
<dbReference type="GO" id="GO:0031505">
    <property type="term" value="P:fungal-type cell wall organization"/>
    <property type="evidence" value="ECO:0000315"/>
    <property type="project" value="CGD"/>
</dbReference>
<dbReference type="GO" id="GO:0006506">
    <property type="term" value="P:GPI anchor biosynthetic process"/>
    <property type="evidence" value="ECO:0000315"/>
    <property type="project" value="CGD"/>
</dbReference>
<dbReference type="GO" id="GO:0030448">
    <property type="term" value="P:hyphal growth"/>
    <property type="evidence" value="ECO:0000315"/>
    <property type="project" value="CGD"/>
</dbReference>
<dbReference type="InterPro" id="IPR007704">
    <property type="entry name" value="PIG-M"/>
</dbReference>
<dbReference type="PANTHER" id="PTHR12886:SF0">
    <property type="entry name" value="GPI MANNOSYLTRANSFERASE 1"/>
    <property type="match status" value="1"/>
</dbReference>
<dbReference type="PANTHER" id="PTHR12886">
    <property type="entry name" value="PIG-M MANNOSYLTRANSFERASE"/>
    <property type="match status" value="1"/>
</dbReference>
<dbReference type="Pfam" id="PF05007">
    <property type="entry name" value="Mannosyl_trans"/>
    <property type="match status" value="1"/>
</dbReference>
<protein>
    <recommendedName>
        <fullName>GPI mannosyltransferase 1</fullName>
        <ecNumber>2.4.1.-</ecNumber>
    </recommendedName>
    <alternativeName>
        <fullName>GPI mannosyltransferase I</fullName>
        <shortName>GPI-MT-I</shortName>
    </alternativeName>
    <alternativeName>
        <fullName>Glycosylphosphatidylinositol-anchor biosynthesis protein 14</fullName>
    </alternativeName>
</protein>
<comment type="function">
    <text evidence="1">Mannosyltransferase involved in glycosylphosphatidylinositol-anchor biosynthesis. Transfers the first alpha-1,4-mannose to GlcN-acyl-PI during GPI precursor assembly. Required for cell wall integrity (By similarity).</text>
</comment>
<comment type="pathway">
    <text>Glycolipid biosynthesis; glycosylphosphatidylinositol-anchor biosynthesis.</text>
</comment>
<comment type="subcellular location">
    <subcellularLocation>
        <location evidence="1">Endoplasmic reticulum membrane</location>
        <topology evidence="1">Multi-pass membrane protein</topology>
    </subcellularLocation>
</comment>
<comment type="similarity">
    <text evidence="3">Belongs to the PIGM family.</text>
</comment>
<keyword id="KW-0961">Cell wall biogenesis/degradation</keyword>
<keyword id="KW-0256">Endoplasmic reticulum</keyword>
<keyword id="KW-0328">Glycosyltransferase</keyword>
<keyword id="KW-0337">GPI-anchor biosynthesis</keyword>
<keyword id="KW-0472">Membrane</keyword>
<keyword id="KW-1185">Reference proteome</keyword>
<keyword id="KW-0808">Transferase</keyword>
<keyword id="KW-0812">Transmembrane</keyword>
<keyword id="KW-1133">Transmembrane helix</keyword>
<sequence length="398" mass="46549">MSQLKYLITFSILLRFGFFFFGLYQDEYMPVKYTDIDYLVFNDASKFVYQGLSPYLRETYRYTPILAILLIPDNFGKYWYHFGKLLFMVSDVITGLIILKLLSKQQQLSEKKKMILSSIWLLNPMVITISTRGSAESVLTVMIMLSLYYLLDKDNVILSAIWLGLSIHFKIYPIIYLPSILYYLSSQETPFLASVPGINLVNAKNLKYIIITLTTLAVVNYLMFLKYGWEFIDNSYLYHVTRLDHRHNFSVYNMVLYYKSALLEDSNGFDIEKIAFVPQLLLSAVIIPLIFAKEDLISSLFIQTFVFVAFNKVITSQYFIWFLIFLPHFLSKTKLLTTDKITGISCLLLWIISQATWLYFAYKLEFLGENTFDNGLMYSSVFFFLSNCWCTMKFIQSL</sequence>
<gene>
    <name type="primary">GPI14</name>
    <name type="ordered locus">CAALFM_C402100CA</name>
    <name type="ORF">CaO19.12050</name>
    <name type="ORF">CaO19.4581</name>
</gene>
<organism>
    <name type="scientific">Candida albicans (strain SC5314 / ATCC MYA-2876)</name>
    <name type="common">Yeast</name>
    <dbReference type="NCBI Taxonomy" id="237561"/>
    <lineage>
        <taxon>Eukaryota</taxon>
        <taxon>Fungi</taxon>
        <taxon>Dikarya</taxon>
        <taxon>Ascomycota</taxon>
        <taxon>Saccharomycotina</taxon>
        <taxon>Pichiomycetes</taxon>
        <taxon>Debaryomycetaceae</taxon>
        <taxon>Candida/Lodderomyces clade</taxon>
        <taxon>Candida</taxon>
    </lineage>
</organism>
<evidence type="ECO:0000250" key="1"/>
<evidence type="ECO:0000255" key="2"/>
<evidence type="ECO:0000305" key="3"/>
<proteinExistence type="inferred from homology"/>
<feature type="chain" id="PRO_0000246226" description="GPI mannosyltransferase 1">
    <location>
        <begin position="1"/>
        <end position="398"/>
    </location>
</feature>
<feature type="transmembrane region" description="Helical" evidence="2">
    <location>
        <begin position="4"/>
        <end position="24"/>
    </location>
</feature>
<feature type="transmembrane region" description="Helical" evidence="2">
    <location>
        <begin position="79"/>
        <end position="99"/>
    </location>
</feature>
<feature type="transmembrane region" description="Helical" evidence="2">
    <location>
        <begin position="114"/>
        <end position="136"/>
    </location>
</feature>
<feature type="transmembrane region" description="Helical" evidence="2">
    <location>
        <begin position="156"/>
        <end position="176"/>
    </location>
</feature>
<feature type="transmembrane region" description="Helical" evidence="2">
    <location>
        <begin position="209"/>
        <end position="229"/>
    </location>
</feature>
<feature type="transmembrane region" description="Helical" evidence="2">
    <location>
        <begin position="271"/>
        <end position="291"/>
    </location>
</feature>
<feature type="transmembrane region" description="Helical" evidence="2">
    <location>
        <begin position="305"/>
        <end position="325"/>
    </location>
</feature>
<feature type="transmembrane region" description="Helical" evidence="2">
    <location>
        <begin position="341"/>
        <end position="361"/>
    </location>
</feature>
<feature type="transmembrane region" description="Helical" evidence="2">
    <location>
        <begin position="375"/>
        <end position="395"/>
    </location>
</feature>
<accession>Q5AMR5</accession>
<accession>A0A1D8PLF8</accession>
<name>GPI14_CANAL</name>
<reference key="1">
    <citation type="journal article" date="2004" name="Proc. Natl. Acad. Sci. U.S.A.">
        <title>The diploid genome sequence of Candida albicans.</title>
        <authorList>
            <person name="Jones T."/>
            <person name="Federspiel N.A."/>
            <person name="Chibana H."/>
            <person name="Dungan J."/>
            <person name="Kalman S."/>
            <person name="Magee B.B."/>
            <person name="Newport G."/>
            <person name="Thorstenson Y.R."/>
            <person name="Agabian N."/>
            <person name="Magee P.T."/>
            <person name="Davis R.W."/>
            <person name="Scherer S."/>
        </authorList>
    </citation>
    <scope>NUCLEOTIDE SEQUENCE [LARGE SCALE GENOMIC DNA]</scope>
    <source>
        <strain>SC5314 / ATCC MYA-2876</strain>
    </source>
</reference>
<reference key="2">
    <citation type="journal article" date="2007" name="Genome Biol.">
        <title>Assembly of the Candida albicans genome into sixteen supercontigs aligned on the eight chromosomes.</title>
        <authorList>
            <person name="van het Hoog M."/>
            <person name="Rast T.J."/>
            <person name="Martchenko M."/>
            <person name="Grindle S."/>
            <person name="Dignard D."/>
            <person name="Hogues H."/>
            <person name="Cuomo C."/>
            <person name="Berriman M."/>
            <person name="Scherer S."/>
            <person name="Magee B.B."/>
            <person name="Whiteway M."/>
            <person name="Chibana H."/>
            <person name="Nantel A."/>
            <person name="Magee P.T."/>
        </authorList>
    </citation>
    <scope>GENOME REANNOTATION</scope>
    <source>
        <strain>SC5314 / ATCC MYA-2876</strain>
    </source>
</reference>
<reference key="3">
    <citation type="journal article" date="2013" name="Genome Biol.">
        <title>Assembly of a phased diploid Candida albicans genome facilitates allele-specific measurements and provides a simple model for repeat and indel structure.</title>
        <authorList>
            <person name="Muzzey D."/>
            <person name="Schwartz K."/>
            <person name="Weissman J.S."/>
            <person name="Sherlock G."/>
        </authorList>
    </citation>
    <scope>NUCLEOTIDE SEQUENCE [LARGE SCALE GENOMIC DNA]</scope>
    <scope>GENOME REANNOTATION</scope>
    <source>
        <strain>SC5314 / ATCC MYA-2876</strain>
    </source>
</reference>